<feature type="signal peptide" evidence="1">
    <location>
        <begin position="1"/>
        <end position="21"/>
    </location>
</feature>
<feature type="chain" id="PRO_0000021254" description="Fibroin heavy chain">
    <location>
        <begin position="22"/>
        <end position="178" status="greater than"/>
    </location>
</feature>
<feature type="region of interest" description="Highly repetitive">
    <location>
        <begin position="149"/>
        <end position="178" status="greater than"/>
    </location>
</feature>
<feature type="sequence conflict" description="In Ref. 1; CAA27612." evidence="2" ref="1">
    <original>C</original>
    <variation>V</variation>
    <location>
        <position position="10"/>
    </location>
</feature>
<feature type="non-terminal residue">
    <location>
        <position position="178"/>
    </location>
</feature>
<accession>Q99050</accession>
<comment type="function">
    <text>Core component of the silk filament; a strong, insoluble and chemically inert fiber.</text>
</comment>
<comment type="subunit">
    <text>Silk fibroin elementary unit consists in a disulfide-linked heavy and light chain and a p25 glycoprotein in molar ratios of 6:6:1. This results in a complex of approximately 2.3 MDa.</text>
</comment>
<comment type="tissue specificity">
    <text>Produced exclusively in the posterior (PSG) section of silk glands, which are essentially modified salivary glands.</text>
</comment>
<comment type="domain">
    <text>Composed of antiparallel beta sheets. The strands of the beta sheets run parallel to the fiber axis. Long stretches of silk fibroin are composed of microcrystalline arrays of (-Gly-Ser-Gly-Ala-Gly-Ala-)n interrupted by regions containing bulkier residues. The fiber is composed of microcrystalline arrays alternating with amorphous regions.</text>
</comment>
<comment type="PTM">
    <text>The interchain disulfide bridge is essential for the intracellular transport and secretion of fibroin.</text>
</comment>
<gene>
    <name type="primary">FIBH</name>
</gene>
<dbReference type="EMBL" id="X03973">
    <property type="protein sequence ID" value="CAA27612.1"/>
    <property type="molecule type" value="Genomic_DNA"/>
</dbReference>
<dbReference type="SMR" id="Q99050"/>
<dbReference type="OrthoDB" id="7491244at2759"/>
<dbReference type="Proteomes" id="UP000504629">
    <property type="component" value="Unplaced"/>
</dbReference>
<dbReference type="Gene3D" id="6.20.280.10">
    <property type="match status" value="1"/>
</dbReference>
<dbReference type="InterPro" id="IPR049375">
    <property type="entry name" value="Fib-H_N"/>
</dbReference>
<dbReference type="InterPro" id="IPR049376">
    <property type="entry name" value="Fib-H_N_sf"/>
</dbReference>
<dbReference type="Pfam" id="PF20820">
    <property type="entry name" value="Fib-H_N"/>
    <property type="match status" value="1"/>
</dbReference>
<sequence>MRVKTFVILCCALQYVAYTNANINDFDEDYFGSDVTVQSSNTTDEIIRDASGAVIEEEITTKKMQRKNKNHGILGKNEKMIKTFVITTDSDGNESIVEEDVLMKTLSDGTVAQSYVAADAGAYSQSGPYVSNSGYSTHQGYRSDFASAAVGAGAGAGAAAGSGAGAGAGYGAASGAGA</sequence>
<protein>
    <recommendedName>
        <fullName>Fibroin heavy chain</fullName>
        <shortName>Fib-H</shortName>
    </recommendedName>
    <alternativeName>
        <fullName>H-fibroin</fullName>
    </alternativeName>
</protein>
<proteinExistence type="evidence at transcript level"/>
<name>FIBH_BOMMA</name>
<organism>
    <name type="scientific">Bombyx mandarina</name>
    <name type="common">Wild silk moth</name>
    <name type="synonym">Wild silkworm</name>
    <dbReference type="NCBI Taxonomy" id="7092"/>
    <lineage>
        <taxon>Eukaryota</taxon>
        <taxon>Metazoa</taxon>
        <taxon>Ecdysozoa</taxon>
        <taxon>Arthropoda</taxon>
        <taxon>Hexapoda</taxon>
        <taxon>Insecta</taxon>
        <taxon>Pterygota</taxon>
        <taxon>Neoptera</taxon>
        <taxon>Endopterygota</taxon>
        <taxon>Lepidoptera</taxon>
        <taxon>Glossata</taxon>
        <taxon>Ditrysia</taxon>
        <taxon>Bombycoidea</taxon>
        <taxon>Bombycidae</taxon>
        <taxon>Bombycinae</taxon>
        <taxon>Bombyx</taxon>
    </lineage>
</organism>
<evidence type="ECO:0000255" key="1"/>
<evidence type="ECO:0000305" key="2"/>
<keyword id="KW-1015">Disulfide bond</keyword>
<keyword id="KW-0677">Repeat</keyword>
<keyword id="KW-0732">Signal</keyword>
<keyword id="KW-0737">Silk protein</keyword>
<reference key="1">
    <citation type="journal article" date="1986" name="Mol. Gen. Genet.">
        <title>The sequence around the 5' end of the fibroin gene from the wild silkworm, Bombyx mandarina, and comparison with that of the domesticated species, B. mori.</title>
        <authorList>
            <person name="Kusuda J."/>
            <person name="Tazima Y."/>
            <person name="Onimaru K."/>
            <person name="Ninaki O."/>
            <person name="Suzuki Y."/>
        </authorList>
    </citation>
    <scope>NUCLEOTIDE SEQUENCE [GENOMIC DNA]</scope>
    <source>
        <tissue>Posterior silk gland</tissue>
    </source>
</reference>